<organism>
    <name type="scientific">Rickettsia conorii (strain ATCC VR-613 / Malish 7)</name>
    <dbReference type="NCBI Taxonomy" id="272944"/>
    <lineage>
        <taxon>Bacteria</taxon>
        <taxon>Pseudomonadati</taxon>
        <taxon>Pseudomonadota</taxon>
        <taxon>Alphaproteobacteria</taxon>
        <taxon>Rickettsiales</taxon>
        <taxon>Rickettsiaceae</taxon>
        <taxon>Rickettsieae</taxon>
        <taxon>Rickettsia</taxon>
        <taxon>spotted fever group</taxon>
    </lineage>
</organism>
<gene>
    <name evidence="1" type="primary">rnc</name>
    <name type="ordered locus">RC0157</name>
</gene>
<accession>Q92JB0</accession>
<reference key="1">
    <citation type="journal article" date="2001" name="Science">
        <title>Mechanisms of evolution in Rickettsia conorii and R. prowazekii.</title>
        <authorList>
            <person name="Ogata H."/>
            <person name="Audic S."/>
            <person name="Renesto-Audiffren P."/>
            <person name="Fournier P.-E."/>
            <person name="Barbe V."/>
            <person name="Samson D."/>
            <person name="Roux V."/>
            <person name="Cossart P."/>
            <person name="Weissenbach J."/>
            <person name="Claverie J.-M."/>
            <person name="Raoult D."/>
        </authorList>
    </citation>
    <scope>NUCLEOTIDE SEQUENCE [LARGE SCALE GENOMIC DNA]</scope>
    <source>
        <strain>ATCC VR-613 / Malish 7</strain>
    </source>
</reference>
<feature type="chain" id="PRO_0000180425" description="Ribonuclease 3">
    <location>
        <begin position="1"/>
        <end position="227"/>
    </location>
</feature>
<feature type="domain" description="RNase III" evidence="1">
    <location>
        <begin position="4"/>
        <end position="133"/>
    </location>
</feature>
<feature type="domain" description="DRBM" evidence="1">
    <location>
        <begin position="158"/>
        <end position="226"/>
    </location>
</feature>
<feature type="active site" evidence="1">
    <location>
        <position position="50"/>
    </location>
</feature>
<feature type="active site" evidence="1">
    <location>
        <position position="122"/>
    </location>
</feature>
<feature type="binding site" evidence="1">
    <location>
        <position position="46"/>
    </location>
    <ligand>
        <name>Mg(2+)</name>
        <dbReference type="ChEBI" id="CHEBI:18420"/>
    </ligand>
</feature>
<feature type="binding site" evidence="1">
    <location>
        <position position="119"/>
    </location>
    <ligand>
        <name>Mg(2+)</name>
        <dbReference type="ChEBI" id="CHEBI:18420"/>
    </ligand>
</feature>
<feature type="binding site" evidence="1">
    <location>
        <position position="122"/>
    </location>
    <ligand>
        <name>Mg(2+)</name>
        <dbReference type="ChEBI" id="CHEBI:18420"/>
    </ligand>
</feature>
<sequence>MESFEKLEKLLSYSFKNKELLIEALSHPSLRQHHEYKDDKDYERLEFLGDAVLNLVITEILFRNFANYNEGNLAKIRSYLVCKETICMVGAKLTLKNYIIMTHGEEVAGGRDNLNNIENATEALIAAIYLDSNIETTHDIIENLWAEFIKVQNLTDYDPKTALQEWAQASDHHLPIYRLIKREGASHSSTFTVLVKVKDYEQTGTGHTIKEAEKNAARSLLHRLKND</sequence>
<dbReference type="EC" id="3.1.26.3" evidence="1"/>
<dbReference type="EMBL" id="AE006914">
    <property type="protein sequence ID" value="AAL02695.1"/>
    <property type="molecule type" value="Genomic_DNA"/>
</dbReference>
<dbReference type="PIR" id="E97719">
    <property type="entry name" value="E97719"/>
</dbReference>
<dbReference type="RefSeq" id="WP_010976833.1">
    <property type="nucleotide sequence ID" value="NC_003103.1"/>
</dbReference>
<dbReference type="SMR" id="Q92JB0"/>
<dbReference type="GeneID" id="928034"/>
<dbReference type="KEGG" id="rco:RC0157"/>
<dbReference type="PATRIC" id="fig|272944.4.peg.186"/>
<dbReference type="HOGENOM" id="CLU_000907_1_1_5"/>
<dbReference type="Proteomes" id="UP000000816">
    <property type="component" value="Chromosome"/>
</dbReference>
<dbReference type="GO" id="GO:0005737">
    <property type="term" value="C:cytoplasm"/>
    <property type="evidence" value="ECO:0007669"/>
    <property type="project" value="UniProtKB-SubCell"/>
</dbReference>
<dbReference type="GO" id="GO:0003725">
    <property type="term" value="F:double-stranded RNA binding"/>
    <property type="evidence" value="ECO:0007669"/>
    <property type="project" value="TreeGrafter"/>
</dbReference>
<dbReference type="GO" id="GO:0046872">
    <property type="term" value="F:metal ion binding"/>
    <property type="evidence" value="ECO:0007669"/>
    <property type="project" value="UniProtKB-KW"/>
</dbReference>
<dbReference type="GO" id="GO:0004525">
    <property type="term" value="F:ribonuclease III activity"/>
    <property type="evidence" value="ECO:0007669"/>
    <property type="project" value="UniProtKB-UniRule"/>
</dbReference>
<dbReference type="GO" id="GO:0019843">
    <property type="term" value="F:rRNA binding"/>
    <property type="evidence" value="ECO:0007669"/>
    <property type="project" value="UniProtKB-KW"/>
</dbReference>
<dbReference type="GO" id="GO:0006397">
    <property type="term" value="P:mRNA processing"/>
    <property type="evidence" value="ECO:0007669"/>
    <property type="project" value="UniProtKB-UniRule"/>
</dbReference>
<dbReference type="GO" id="GO:0010468">
    <property type="term" value="P:regulation of gene expression"/>
    <property type="evidence" value="ECO:0007669"/>
    <property type="project" value="TreeGrafter"/>
</dbReference>
<dbReference type="GO" id="GO:0006364">
    <property type="term" value="P:rRNA processing"/>
    <property type="evidence" value="ECO:0007669"/>
    <property type="project" value="UniProtKB-UniRule"/>
</dbReference>
<dbReference type="GO" id="GO:0008033">
    <property type="term" value="P:tRNA processing"/>
    <property type="evidence" value="ECO:0007669"/>
    <property type="project" value="UniProtKB-KW"/>
</dbReference>
<dbReference type="CDD" id="cd10845">
    <property type="entry name" value="DSRM_RNAse_III_family"/>
    <property type="match status" value="1"/>
</dbReference>
<dbReference type="CDD" id="cd00593">
    <property type="entry name" value="RIBOc"/>
    <property type="match status" value="1"/>
</dbReference>
<dbReference type="FunFam" id="1.10.1520.10:FF:000001">
    <property type="entry name" value="Ribonuclease 3"/>
    <property type="match status" value="1"/>
</dbReference>
<dbReference type="Gene3D" id="3.30.160.20">
    <property type="match status" value="1"/>
</dbReference>
<dbReference type="Gene3D" id="1.10.1520.10">
    <property type="entry name" value="Ribonuclease III domain"/>
    <property type="match status" value="1"/>
</dbReference>
<dbReference type="HAMAP" id="MF_00104">
    <property type="entry name" value="RNase_III"/>
    <property type="match status" value="1"/>
</dbReference>
<dbReference type="InterPro" id="IPR014720">
    <property type="entry name" value="dsRBD_dom"/>
</dbReference>
<dbReference type="InterPro" id="IPR011907">
    <property type="entry name" value="RNase_III"/>
</dbReference>
<dbReference type="InterPro" id="IPR000999">
    <property type="entry name" value="RNase_III_dom"/>
</dbReference>
<dbReference type="InterPro" id="IPR036389">
    <property type="entry name" value="RNase_III_sf"/>
</dbReference>
<dbReference type="NCBIfam" id="TIGR02191">
    <property type="entry name" value="RNaseIII"/>
    <property type="match status" value="1"/>
</dbReference>
<dbReference type="PANTHER" id="PTHR11207:SF0">
    <property type="entry name" value="RIBONUCLEASE 3"/>
    <property type="match status" value="1"/>
</dbReference>
<dbReference type="PANTHER" id="PTHR11207">
    <property type="entry name" value="RIBONUCLEASE III"/>
    <property type="match status" value="1"/>
</dbReference>
<dbReference type="Pfam" id="PF00035">
    <property type="entry name" value="dsrm"/>
    <property type="match status" value="1"/>
</dbReference>
<dbReference type="Pfam" id="PF14622">
    <property type="entry name" value="Ribonucleas_3_3"/>
    <property type="match status" value="1"/>
</dbReference>
<dbReference type="SMART" id="SM00358">
    <property type="entry name" value="DSRM"/>
    <property type="match status" value="1"/>
</dbReference>
<dbReference type="SMART" id="SM00535">
    <property type="entry name" value="RIBOc"/>
    <property type="match status" value="1"/>
</dbReference>
<dbReference type="SUPFAM" id="SSF54768">
    <property type="entry name" value="dsRNA-binding domain-like"/>
    <property type="match status" value="1"/>
</dbReference>
<dbReference type="SUPFAM" id="SSF69065">
    <property type="entry name" value="RNase III domain-like"/>
    <property type="match status" value="1"/>
</dbReference>
<dbReference type="PROSITE" id="PS50137">
    <property type="entry name" value="DS_RBD"/>
    <property type="match status" value="1"/>
</dbReference>
<dbReference type="PROSITE" id="PS00517">
    <property type="entry name" value="RNASE_3_1"/>
    <property type="match status" value="1"/>
</dbReference>
<dbReference type="PROSITE" id="PS50142">
    <property type="entry name" value="RNASE_3_2"/>
    <property type="match status" value="1"/>
</dbReference>
<comment type="function">
    <text evidence="1">Digests double-stranded RNA. Involved in the processing of primary rRNA transcript to yield the immediate precursors to the large and small rRNAs (23S and 16S). Processes some mRNAs, and tRNAs when they are encoded in the rRNA operon. Processes pre-crRNA and tracrRNA of type II CRISPR loci if present in the organism.</text>
</comment>
<comment type="catalytic activity">
    <reaction evidence="1">
        <text>Endonucleolytic cleavage to 5'-phosphomonoester.</text>
        <dbReference type="EC" id="3.1.26.3"/>
    </reaction>
</comment>
<comment type="cofactor">
    <cofactor evidence="1">
        <name>Mg(2+)</name>
        <dbReference type="ChEBI" id="CHEBI:18420"/>
    </cofactor>
</comment>
<comment type="subunit">
    <text evidence="1">Homodimer.</text>
</comment>
<comment type="subcellular location">
    <subcellularLocation>
        <location evidence="1">Cytoplasm</location>
    </subcellularLocation>
</comment>
<comment type="similarity">
    <text evidence="1">Belongs to the ribonuclease III family.</text>
</comment>
<evidence type="ECO:0000255" key="1">
    <source>
        <dbReference type="HAMAP-Rule" id="MF_00104"/>
    </source>
</evidence>
<protein>
    <recommendedName>
        <fullName evidence="1">Ribonuclease 3</fullName>
        <ecNumber evidence="1">3.1.26.3</ecNumber>
    </recommendedName>
    <alternativeName>
        <fullName evidence="1">Ribonuclease III</fullName>
        <shortName evidence="1">RNase III</shortName>
    </alternativeName>
</protein>
<keyword id="KW-0963">Cytoplasm</keyword>
<keyword id="KW-0255">Endonuclease</keyword>
<keyword id="KW-0378">Hydrolase</keyword>
<keyword id="KW-0460">Magnesium</keyword>
<keyword id="KW-0479">Metal-binding</keyword>
<keyword id="KW-0507">mRNA processing</keyword>
<keyword id="KW-0540">Nuclease</keyword>
<keyword id="KW-0694">RNA-binding</keyword>
<keyword id="KW-0698">rRNA processing</keyword>
<keyword id="KW-0699">rRNA-binding</keyword>
<keyword id="KW-0819">tRNA processing</keyword>
<name>RNC_RICCN</name>
<proteinExistence type="inferred from homology"/>